<keyword id="KW-0002">3D-structure</keyword>
<keyword id="KW-0158">Chromosome</keyword>
<keyword id="KW-1185">Reference proteome</keyword>
<keyword id="KW-0779">Telomere</keyword>
<organism>
    <name type="scientific">Saccharomyces cerevisiae (strain ATCC 204508 / S288c)</name>
    <name type="common">Baker's yeast</name>
    <dbReference type="NCBI Taxonomy" id="559292"/>
    <lineage>
        <taxon>Eukaryota</taxon>
        <taxon>Fungi</taxon>
        <taxon>Dikarya</taxon>
        <taxon>Ascomycota</taxon>
        <taxon>Saccharomycotina</taxon>
        <taxon>Saccharomycetes</taxon>
        <taxon>Saccharomycetales</taxon>
        <taxon>Saccharomycetaceae</taxon>
        <taxon>Saccharomyces</taxon>
    </lineage>
</organism>
<comment type="function">
    <text evidence="1 4">Has a role in telomere length regulation and telomere end protection. Acts as an inhibitor of telomerase loading through its interaction with CDC13.</text>
</comment>
<comment type="subunit">
    <text evidence="1 2 3">Interacts with CDC13 and TEN1.</text>
</comment>
<comment type="interaction">
    <interactant intactId="EBI-18427">
        <id>P38960</id>
    </interactant>
    <interactant intactId="EBI-4187">
        <id>P32797</id>
        <label>CDC13</label>
    </interactant>
    <organismsDiffer>false</organismsDiffer>
    <experiments>10</experiments>
</comment>
<comment type="interaction">
    <interactant intactId="EBI-18427">
        <id>P38960</id>
    </interactant>
    <interactant intactId="EBI-6111">
        <id>P38121</id>
        <label>POL12</label>
    </interactant>
    <organismsDiffer>false</organismsDiffer>
    <experiments>2</experiments>
</comment>
<comment type="interaction">
    <interactant intactId="EBI-18427">
        <id>P38960</id>
    </interactant>
    <interactant intactId="EBI-35131">
        <id>Q07921</id>
        <label>TEN1</label>
    </interactant>
    <organismsDiffer>false</organismsDiffer>
    <experiments>12</experiments>
</comment>
<comment type="subcellular location">
    <subcellularLocation>
        <location evidence="5">Chromosome</location>
        <location evidence="5">Telomere</location>
    </subcellularLocation>
</comment>
<comment type="domain">
    <text>The C-terminal wHLH region seems to mediate telomere-specific function.</text>
</comment>
<accession>P38960</accession>
<accession>D6VS69</accession>
<protein>
    <recommendedName>
        <fullName>Protein STN1</fullName>
    </recommendedName>
</protein>
<reference key="1">
    <citation type="journal article" date="1997" name="Genes Dev.">
        <title>Stn1, a new Saccharomyces cerevisiae protein, is implicated in telomere size regulation in association with Cdc13.</title>
        <authorList>
            <person name="Grandin N."/>
            <person name="Reed S.I."/>
            <person name="Charbonneau M."/>
        </authorList>
    </citation>
    <scope>NUCLEOTIDE SEQUENCE [GENOMIC DNA]</scope>
    <scope>FUNCTION</scope>
</reference>
<reference key="2">
    <citation type="journal article" date="1995" name="Yeast">
        <title>Analysis of a 32.8 kb segment of yeast chromosome IV reveals 21 open reading frames, including TPS2, PPH3, RAD55, SED1, PDC2, AFR1, SSS1, SLU7 and a tRNA for arginine.</title>
        <authorList>
            <person name="Coster F."/>
            <person name="Jonniaux J.-L."/>
            <person name="Goffeau A."/>
        </authorList>
    </citation>
    <scope>NUCLEOTIDE SEQUENCE [GENOMIC DNA]</scope>
    <source>
        <strain>ATCC 96604 / S288c / FY1679</strain>
    </source>
</reference>
<reference key="3">
    <citation type="journal article" date="1997" name="Nature">
        <title>The nucleotide sequence of Saccharomyces cerevisiae chromosome IV.</title>
        <authorList>
            <person name="Jacq C."/>
            <person name="Alt-Moerbe J."/>
            <person name="Andre B."/>
            <person name="Arnold W."/>
            <person name="Bahr A."/>
            <person name="Ballesta J.P.G."/>
            <person name="Bargues M."/>
            <person name="Baron L."/>
            <person name="Becker A."/>
            <person name="Biteau N."/>
            <person name="Bloecker H."/>
            <person name="Blugeon C."/>
            <person name="Boskovic J."/>
            <person name="Brandt P."/>
            <person name="Brueckner M."/>
            <person name="Buitrago M.J."/>
            <person name="Coster F."/>
            <person name="Delaveau T."/>
            <person name="del Rey F."/>
            <person name="Dujon B."/>
            <person name="Eide L.G."/>
            <person name="Garcia-Cantalejo J.M."/>
            <person name="Goffeau A."/>
            <person name="Gomez-Peris A."/>
            <person name="Granotier C."/>
            <person name="Hanemann V."/>
            <person name="Hankeln T."/>
            <person name="Hoheisel J.D."/>
            <person name="Jaeger W."/>
            <person name="Jimenez A."/>
            <person name="Jonniaux J.-L."/>
            <person name="Kraemer C."/>
            <person name="Kuester H."/>
            <person name="Laamanen P."/>
            <person name="Legros Y."/>
            <person name="Louis E.J."/>
            <person name="Moeller-Rieker S."/>
            <person name="Monnet A."/>
            <person name="Moro M."/>
            <person name="Mueller-Auer S."/>
            <person name="Nussbaumer B."/>
            <person name="Paricio N."/>
            <person name="Paulin L."/>
            <person name="Perea J."/>
            <person name="Perez-Alonso M."/>
            <person name="Perez-Ortin J.E."/>
            <person name="Pohl T.M."/>
            <person name="Prydz H."/>
            <person name="Purnelle B."/>
            <person name="Rasmussen S.W."/>
            <person name="Remacha M.A."/>
            <person name="Revuelta J.L."/>
            <person name="Rieger M."/>
            <person name="Salom D."/>
            <person name="Saluz H.P."/>
            <person name="Saiz J.E."/>
            <person name="Saren A.-M."/>
            <person name="Schaefer M."/>
            <person name="Scharfe M."/>
            <person name="Schmidt E.R."/>
            <person name="Schneider C."/>
            <person name="Scholler P."/>
            <person name="Schwarz S."/>
            <person name="Soler-Mira A."/>
            <person name="Urrestarazu L.A."/>
            <person name="Verhasselt P."/>
            <person name="Vissers S."/>
            <person name="Voet M."/>
            <person name="Volckaert G."/>
            <person name="Wagner G."/>
            <person name="Wambutt R."/>
            <person name="Wedler E."/>
            <person name="Wedler H."/>
            <person name="Woelfl S."/>
            <person name="Harris D.E."/>
            <person name="Bowman S."/>
            <person name="Brown D."/>
            <person name="Churcher C.M."/>
            <person name="Connor R."/>
            <person name="Dedman K."/>
            <person name="Gentles S."/>
            <person name="Hamlin N."/>
            <person name="Hunt S."/>
            <person name="Jones L."/>
            <person name="McDonald S."/>
            <person name="Murphy L.D."/>
            <person name="Niblett D."/>
            <person name="Odell C."/>
            <person name="Oliver K."/>
            <person name="Rajandream M.A."/>
            <person name="Richards C."/>
            <person name="Shore L."/>
            <person name="Walsh S.V."/>
            <person name="Barrell B.G."/>
            <person name="Dietrich F.S."/>
            <person name="Mulligan J.T."/>
            <person name="Allen E."/>
            <person name="Araujo R."/>
            <person name="Aviles E."/>
            <person name="Berno A."/>
            <person name="Carpenter J."/>
            <person name="Chen E."/>
            <person name="Cherry J.M."/>
            <person name="Chung E."/>
            <person name="Duncan M."/>
            <person name="Hunicke-Smith S."/>
            <person name="Hyman R.W."/>
            <person name="Komp C."/>
            <person name="Lashkari D."/>
            <person name="Lew H."/>
            <person name="Lin D."/>
            <person name="Mosedale D."/>
            <person name="Nakahara K."/>
            <person name="Namath A."/>
            <person name="Oefner P."/>
            <person name="Oh C."/>
            <person name="Petel F.X."/>
            <person name="Roberts D."/>
            <person name="Schramm S."/>
            <person name="Schroeder M."/>
            <person name="Shogren T."/>
            <person name="Shroff N."/>
            <person name="Winant A."/>
            <person name="Yelton M.A."/>
            <person name="Botstein D."/>
            <person name="Davis R.W."/>
            <person name="Johnston M."/>
            <person name="Andrews S."/>
            <person name="Brinkman R."/>
            <person name="Cooper J."/>
            <person name="Ding H."/>
            <person name="Du Z."/>
            <person name="Favello A."/>
            <person name="Fulton L."/>
            <person name="Gattung S."/>
            <person name="Greco T."/>
            <person name="Hallsworth K."/>
            <person name="Hawkins J."/>
            <person name="Hillier L.W."/>
            <person name="Jier M."/>
            <person name="Johnson D."/>
            <person name="Johnston L."/>
            <person name="Kirsten J."/>
            <person name="Kucaba T."/>
            <person name="Langston Y."/>
            <person name="Latreille P."/>
            <person name="Le T."/>
            <person name="Mardis E."/>
            <person name="Menezes S."/>
            <person name="Miller N."/>
            <person name="Nhan M."/>
            <person name="Pauley A."/>
            <person name="Peluso D."/>
            <person name="Rifkin L."/>
            <person name="Riles L."/>
            <person name="Taich A."/>
            <person name="Trevaskis E."/>
            <person name="Vignati D."/>
            <person name="Wilcox L."/>
            <person name="Wohldman P."/>
            <person name="Vaudin M."/>
            <person name="Wilson R."/>
            <person name="Waterston R."/>
            <person name="Albermann K."/>
            <person name="Hani J."/>
            <person name="Heumann K."/>
            <person name="Kleine K."/>
            <person name="Mewes H.-W."/>
            <person name="Zollner A."/>
            <person name="Zaccaria P."/>
        </authorList>
    </citation>
    <scope>NUCLEOTIDE SEQUENCE [LARGE SCALE GENOMIC DNA]</scope>
    <source>
        <strain>ATCC 204508 / S288c</strain>
    </source>
</reference>
<reference key="4">
    <citation type="journal article" date="2014" name="G3 (Bethesda)">
        <title>The reference genome sequence of Saccharomyces cerevisiae: Then and now.</title>
        <authorList>
            <person name="Engel S.R."/>
            <person name="Dietrich F.S."/>
            <person name="Fisk D.G."/>
            <person name="Binkley G."/>
            <person name="Balakrishnan R."/>
            <person name="Costanzo M.C."/>
            <person name="Dwight S.S."/>
            <person name="Hitz B.C."/>
            <person name="Karra K."/>
            <person name="Nash R.S."/>
            <person name="Weng S."/>
            <person name="Wong E.D."/>
            <person name="Lloyd P."/>
            <person name="Skrzypek M.S."/>
            <person name="Miyasato S.R."/>
            <person name="Simison M."/>
            <person name="Cherry J.M."/>
        </authorList>
    </citation>
    <scope>GENOME REANNOTATION</scope>
    <source>
        <strain>ATCC 204508 / S288c</strain>
    </source>
</reference>
<reference key="5">
    <citation type="journal article" date="2007" name="Genome Res.">
        <title>Approaching a complete repository of sequence-verified protein-encoding clones for Saccharomyces cerevisiae.</title>
        <authorList>
            <person name="Hu Y."/>
            <person name="Rolfs A."/>
            <person name="Bhullar B."/>
            <person name="Murthy T.V.S."/>
            <person name="Zhu C."/>
            <person name="Berger M.F."/>
            <person name="Camargo A.A."/>
            <person name="Kelley F."/>
            <person name="McCarron S."/>
            <person name="Jepson D."/>
            <person name="Richardson A."/>
            <person name="Raphael J."/>
            <person name="Moreira D."/>
            <person name="Taycher E."/>
            <person name="Zuo D."/>
            <person name="Mohr S."/>
            <person name="Kane M.F."/>
            <person name="Williamson J."/>
            <person name="Simpson A.J.G."/>
            <person name="Bulyk M.L."/>
            <person name="Harlow E."/>
            <person name="Marsischky G."/>
            <person name="Kolodner R.D."/>
            <person name="LaBaer J."/>
        </authorList>
    </citation>
    <scope>NUCLEOTIDE SEQUENCE [GENOMIC DNA]</scope>
    <source>
        <strain>ATCC 204508 / S288c</strain>
    </source>
</reference>
<reference key="6">
    <citation type="journal article" date="2001" name="EMBO J.">
        <title>Ten1 functions in telomere end protection and length regulation in association with Stn1 and Cdc13.</title>
        <authorList>
            <person name="Grandin N."/>
            <person name="Damon C."/>
            <person name="Charbonneau M."/>
        </authorList>
    </citation>
    <scope>FUNCTION</scope>
    <scope>INTERACTION WITH TEN1</scope>
</reference>
<reference key="7">
    <citation type="journal article" date="2001" name="Genes Dev.">
        <title>Cdc13 both positively and negatively regulates telomere replication.</title>
        <authorList>
            <person name="Chandra A."/>
            <person name="Hughes T.R."/>
            <person name="Nugent C.I."/>
            <person name="Lundblad V."/>
        </authorList>
    </citation>
    <scope>INTERACTION WITH CDC13</scope>
</reference>
<reference key="8">
    <citation type="journal article" date="2009" name="Genes Dev.">
        <title>Stn1-Ten1 is an Rpa2-Rpa3-like complex at telomeres.</title>
        <authorList>
            <person name="Sun J."/>
            <person name="Yu E.Y."/>
            <person name="Yang Y."/>
            <person name="Confer L.A."/>
            <person name="Sun S.H."/>
            <person name="Wan K."/>
            <person name="Lue N.F."/>
            <person name="Lei M."/>
        </authorList>
    </citation>
    <scope>X-RAY CRYSTALLOGRAPHY (2.1 ANGSTROMS) OF 311-494</scope>
    <scope>OB FOLD DNA-BINDING</scope>
    <scope>SUBUNIT</scope>
    <scope>WHTH REGIONS</scope>
    <scope>MUTAGENESIS OF ASP-397 AND TRP-466</scope>
</reference>
<evidence type="ECO:0000269" key="1">
    <source>
    </source>
</evidence>
<evidence type="ECO:0000269" key="2">
    <source>
    </source>
</evidence>
<evidence type="ECO:0000269" key="3">
    <source>
    </source>
</evidence>
<evidence type="ECO:0000269" key="4">
    <source>
    </source>
</evidence>
<evidence type="ECO:0000305" key="5"/>
<evidence type="ECO:0007829" key="6">
    <source>
        <dbReference type="PDB" id="3KEY"/>
    </source>
</evidence>
<name>STN1_YEAST</name>
<proteinExistence type="evidence at protein level"/>
<feature type="chain" id="PRO_0000072279" description="Protein STN1">
    <location>
        <begin position="1"/>
        <end position="494"/>
    </location>
</feature>
<feature type="DNA-binding region" description="OB">
    <location>
        <begin position="62"/>
        <end position="159"/>
    </location>
</feature>
<feature type="region of interest" description="Winged helix-turn-helix (wHTH) 1">
    <location>
        <begin position="311"/>
        <end position="397"/>
    </location>
</feature>
<feature type="region of interest" description="Winged helix-turn-helix (wHTH) 2">
    <location>
        <begin position="396"/>
        <end position="494"/>
    </location>
</feature>
<feature type="mutagenesis site" description="Modest telomere elongation phenotype." evidence="3">
    <original>D</original>
    <variation>A</variation>
    <location>
        <position position="397"/>
    </location>
</feature>
<feature type="mutagenesis site" description="Elongated telomeres." evidence="3">
    <original>W</original>
    <variation>E</variation>
    <location>
        <position position="466"/>
    </location>
</feature>
<feature type="mutagenesis site" description="Elongated telomeres and severe growth defects." evidence="3">
    <original>W</original>
    <variation>R</variation>
    <location>
        <position position="466"/>
    </location>
</feature>
<feature type="helix" evidence="6">
    <location>
        <begin position="315"/>
        <end position="325"/>
    </location>
</feature>
<feature type="strand" evidence="6">
    <location>
        <begin position="326"/>
        <end position="332"/>
    </location>
</feature>
<feature type="helix" evidence="6">
    <location>
        <begin position="333"/>
        <end position="337"/>
    </location>
</feature>
<feature type="helix" evidence="6">
    <location>
        <begin position="340"/>
        <end position="356"/>
    </location>
</feature>
<feature type="helix" evidence="6">
    <location>
        <begin position="365"/>
        <end position="382"/>
    </location>
</feature>
<feature type="strand" evidence="6">
    <location>
        <begin position="385"/>
        <end position="390"/>
    </location>
</feature>
<feature type="turn" evidence="6">
    <location>
        <begin position="391"/>
        <end position="394"/>
    </location>
</feature>
<feature type="strand" evidence="6">
    <location>
        <begin position="395"/>
        <end position="397"/>
    </location>
</feature>
<feature type="helix" evidence="6">
    <location>
        <begin position="399"/>
        <end position="417"/>
    </location>
</feature>
<feature type="strand" evidence="6">
    <location>
        <begin position="421"/>
        <end position="426"/>
    </location>
</feature>
<feature type="helix" evidence="6">
    <location>
        <begin position="427"/>
        <end position="434"/>
    </location>
</feature>
<feature type="helix" evidence="6">
    <location>
        <begin position="441"/>
        <end position="458"/>
    </location>
</feature>
<feature type="turn" evidence="6">
    <location>
        <begin position="460"/>
        <end position="462"/>
    </location>
</feature>
<feature type="strand" evidence="6">
    <location>
        <begin position="463"/>
        <end position="470"/>
    </location>
</feature>
<feature type="strand" evidence="6">
    <location>
        <begin position="482"/>
        <end position="489"/>
    </location>
</feature>
<feature type="turn" evidence="6">
    <location>
        <begin position="491"/>
        <end position="493"/>
    </location>
</feature>
<sequence length="494" mass="57511">MDKYGHIAHQEGDVCYYIPRLFKYNSYYSGTEDVRIFVGDLKYRMRVSLQICEKYYDRRLSMLFWKNHPLQQIHLIGCIIGLQFKWIGKQEYIFFQLDDCTSDSSLVGYTSDMRFLTCKVKKDSILSWGLNITDLIGLTLHVYGQASLNYQELQVEYLRLCYSLTEEIDHWKITMNMREQLDTPWSLSDFVIGELFTQEQEWTPETSQIEVVNPDFVGIGYKTPESKRNETTFIEQLQEERLKDELEIISPYNSTDTSNSVHSLSFRFVSSLKDFPETHFLNSGDQIDNGNDEQLKKLEYQSANLPVMIPNRTSAKSNLMLILLGLQMKEISNSDLYKLKEVRSVVTSLASFLFQQQNVGVMKSFDSLEKEAFRDLVNRLVSQGLIGLKDKTSETFDLLPLKNLFEYAEKRISVLMKLQCYTGTVQLSHVQEKLHLPYITTNGIVDVFKECLKRTKKQYPEVLKNWWIDLDPKNGMEDQNSGILLHLEYAAAYS</sequence>
<gene>
    <name type="primary">STN1</name>
    <name type="ordered locus">YDR082W</name>
    <name type="ORF">D4456</name>
    <name type="ORF">YD8554.15</name>
</gene>
<dbReference type="EMBL" id="AF002132">
    <property type="protein sequence ID" value="AAB60885.1"/>
    <property type="molecule type" value="Genomic_DNA"/>
</dbReference>
<dbReference type="EMBL" id="X82086">
    <property type="protein sequence ID" value="CAA57609.1"/>
    <property type="molecule type" value="Genomic_DNA"/>
</dbReference>
<dbReference type="EMBL" id="Z46796">
    <property type="protein sequence ID" value="CAA86804.1"/>
    <property type="molecule type" value="Genomic_DNA"/>
</dbReference>
<dbReference type="EMBL" id="Z74378">
    <property type="protein sequence ID" value="CAA98902.1"/>
    <property type="molecule type" value="Genomic_DNA"/>
</dbReference>
<dbReference type="EMBL" id="AY723774">
    <property type="protein sequence ID" value="AAU09691.1"/>
    <property type="molecule type" value="Genomic_DNA"/>
</dbReference>
<dbReference type="EMBL" id="BK006938">
    <property type="protein sequence ID" value="DAA11929.1"/>
    <property type="molecule type" value="Genomic_DNA"/>
</dbReference>
<dbReference type="PIR" id="S48769">
    <property type="entry name" value="S48769"/>
</dbReference>
<dbReference type="RefSeq" id="NP_010367.1">
    <property type="nucleotide sequence ID" value="NM_001180390.1"/>
</dbReference>
<dbReference type="PDB" id="3K10">
    <property type="method" value="X-ray"/>
    <property type="resolution" value="2.50 A"/>
    <property type="chains" value="A=313-491"/>
</dbReference>
<dbReference type="PDB" id="3KEY">
    <property type="method" value="X-ray"/>
    <property type="resolution" value="2.10 A"/>
    <property type="chains" value="A=311-494"/>
</dbReference>
<dbReference type="PDBsum" id="3K10"/>
<dbReference type="PDBsum" id="3KEY"/>
<dbReference type="SMR" id="P38960"/>
<dbReference type="BioGRID" id="32138">
    <property type="interactions" value="272"/>
</dbReference>
<dbReference type="ComplexPortal" id="CPX-15">
    <property type="entry name" value="CST complex"/>
</dbReference>
<dbReference type="DIP" id="DIP-1230N"/>
<dbReference type="FunCoup" id="P38960">
    <property type="interactions" value="25"/>
</dbReference>
<dbReference type="IntAct" id="P38960">
    <property type="interactions" value="6"/>
</dbReference>
<dbReference type="MINT" id="P38960"/>
<dbReference type="STRING" id="4932.YDR082W"/>
<dbReference type="CarbonylDB" id="P38960"/>
<dbReference type="iPTMnet" id="P38960"/>
<dbReference type="PaxDb" id="4932-YDR082W"/>
<dbReference type="PeptideAtlas" id="P38960"/>
<dbReference type="EnsemblFungi" id="YDR082W_mRNA">
    <property type="protein sequence ID" value="YDR082W"/>
    <property type="gene ID" value="YDR082W"/>
</dbReference>
<dbReference type="GeneID" id="851655"/>
<dbReference type="KEGG" id="sce:YDR082W"/>
<dbReference type="AGR" id="SGD:S000002489"/>
<dbReference type="SGD" id="S000002489">
    <property type="gene designation" value="STN1"/>
</dbReference>
<dbReference type="VEuPathDB" id="FungiDB:YDR082W"/>
<dbReference type="eggNOG" id="ENOG502S0RQ">
    <property type="taxonomic scope" value="Eukaryota"/>
</dbReference>
<dbReference type="HOGENOM" id="CLU_582904_0_0_1"/>
<dbReference type="InParanoid" id="P38960"/>
<dbReference type="OMA" id="CVAGWKW"/>
<dbReference type="OrthoDB" id="77828at2759"/>
<dbReference type="BioCyc" id="YEAST:G3O-29687-MONOMER"/>
<dbReference type="BioGRID-ORCS" id="851655">
    <property type="hits" value="0 hits in 10 CRISPR screens"/>
</dbReference>
<dbReference type="EvolutionaryTrace" id="P38960"/>
<dbReference type="PRO" id="PR:P38960"/>
<dbReference type="Proteomes" id="UP000002311">
    <property type="component" value="Chromosome IV"/>
</dbReference>
<dbReference type="RNAct" id="P38960">
    <property type="molecule type" value="protein"/>
</dbReference>
<dbReference type="GO" id="GO:0000781">
    <property type="term" value="C:chromosome, telomeric region"/>
    <property type="evidence" value="ECO:0000303"/>
    <property type="project" value="ComplexPortal"/>
</dbReference>
<dbReference type="GO" id="GO:1990879">
    <property type="term" value="C:CST complex"/>
    <property type="evidence" value="ECO:0000353"/>
    <property type="project" value="SGD"/>
</dbReference>
<dbReference type="GO" id="GO:0043047">
    <property type="term" value="F:single-stranded telomeric DNA binding"/>
    <property type="evidence" value="ECO:0000314"/>
    <property type="project" value="SGD"/>
</dbReference>
<dbReference type="GO" id="GO:0061770">
    <property type="term" value="F:translation elongation factor binding"/>
    <property type="evidence" value="ECO:0000314"/>
    <property type="project" value="SGD"/>
</dbReference>
<dbReference type="GO" id="GO:0032211">
    <property type="term" value="P:negative regulation of telomere maintenance via telomerase"/>
    <property type="evidence" value="ECO:0000315"/>
    <property type="project" value="SGD"/>
</dbReference>
<dbReference type="GO" id="GO:0032210">
    <property type="term" value="P:regulation of telomere maintenance via telomerase"/>
    <property type="evidence" value="ECO:0000303"/>
    <property type="project" value="ComplexPortal"/>
</dbReference>
<dbReference type="GO" id="GO:0016233">
    <property type="term" value="P:telomere capping"/>
    <property type="evidence" value="ECO:0000315"/>
    <property type="project" value="SGD"/>
</dbReference>
<dbReference type="FunFam" id="3.30.1370.230:FF:000001">
    <property type="entry name" value="Stn1p"/>
    <property type="match status" value="1"/>
</dbReference>
<dbReference type="Gene3D" id="2.40.50.1040">
    <property type="match status" value="1"/>
</dbReference>
<dbReference type="Gene3D" id="3.30.1370.230">
    <property type="entry name" value="Stn1, C-terminal wHTH domain"/>
    <property type="match status" value="1"/>
</dbReference>
<dbReference type="Gene3D" id="1.10.10.1080">
    <property type="entry name" value="Stn1, N-terminal wHTH domain"/>
    <property type="match status" value="1"/>
</dbReference>
<dbReference type="InterPro" id="IPR024263">
    <property type="entry name" value="Stn1_C_fungi"/>
</dbReference>
<dbReference type="InterPro" id="IPR038240">
    <property type="entry name" value="Stn1_C_sf"/>
</dbReference>
<dbReference type="InterPro" id="IPR018856">
    <property type="entry name" value="Stn1_N"/>
</dbReference>
<dbReference type="Pfam" id="PF10451">
    <property type="entry name" value="Stn1"/>
    <property type="match status" value="1"/>
</dbReference>
<dbReference type="Pfam" id="PF12659">
    <property type="entry name" value="Stn1_C"/>
    <property type="match status" value="1"/>
</dbReference>